<sequence>MLIGAPSNMRLRGALELLWRRLLHGLMQLRLVLKMHICSQLNHAIKRRAFLKTKGGKNALHGCLDTVINLQESILAGIRLVPVLPILLDYVLYNISLGGMTFADFLEVLLHFSALEGLCKGVFEADGLEAVH</sequence>
<dbReference type="EMBL" id="KJ412282">
    <property type="protein sequence ID" value="AHX39325.1"/>
    <property type="molecule type" value="Genomic_DNA"/>
</dbReference>
<dbReference type="PIR" id="S69298">
    <property type="entry name" value="S69298"/>
</dbReference>
<dbReference type="MINT" id="A0A023PXP4"/>
<dbReference type="STRING" id="4932.YLR235C"/>
<dbReference type="PaxDb" id="4932-YLR235C"/>
<dbReference type="EnsemblFungi" id="YLR235C_mRNA">
    <property type="protein sequence ID" value="YLR235C"/>
    <property type="gene ID" value="YLR235C"/>
</dbReference>
<dbReference type="AGR" id="SGD:S000004225"/>
<dbReference type="SGD" id="S000004225">
    <property type="gene designation" value="YLR235C"/>
</dbReference>
<dbReference type="HOGENOM" id="CLU_1918718_0_0_1"/>
<dbReference type="GO" id="GO:0006974">
    <property type="term" value="P:DNA damage response"/>
    <property type="evidence" value="ECO:0007001"/>
    <property type="project" value="SGD"/>
</dbReference>
<feature type="chain" id="PRO_0000431045" description="Putative uncharacterized protein YLR235C">
    <location>
        <begin position="1"/>
        <end position="132"/>
    </location>
</feature>
<name>YL235_YEAST</name>
<protein>
    <recommendedName>
        <fullName evidence="1">Putative uncharacterized protein YLR235C</fullName>
    </recommendedName>
</protein>
<reference key="1">
    <citation type="journal article" date="1997" name="Nature">
        <title>The nucleotide sequence of Saccharomyces cerevisiae chromosome XII.</title>
        <authorList>
            <person name="Johnston M."/>
            <person name="Hillier L.W."/>
            <person name="Riles L."/>
            <person name="Albermann K."/>
            <person name="Andre B."/>
            <person name="Ansorge W."/>
            <person name="Benes V."/>
            <person name="Brueckner M."/>
            <person name="Delius H."/>
            <person name="Dubois E."/>
            <person name="Duesterhoeft A."/>
            <person name="Entian K.-D."/>
            <person name="Floeth M."/>
            <person name="Goffeau A."/>
            <person name="Hebling U."/>
            <person name="Heumann K."/>
            <person name="Heuss-Neitzel D."/>
            <person name="Hilbert H."/>
            <person name="Hilger F."/>
            <person name="Kleine K."/>
            <person name="Koetter P."/>
            <person name="Louis E.J."/>
            <person name="Messenguy F."/>
            <person name="Mewes H.-W."/>
            <person name="Miosga T."/>
            <person name="Moestl D."/>
            <person name="Mueller-Auer S."/>
            <person name="Nentwich U."/>
            <person name="Obermaier B."/>
            <person name="Piravandi E."/>
            <person name="Pohl T.M."/>
            <person name="Portetelle D."/>
            <person name="Purnelle B."/>
            <person name="Rechmann S."/>
            <person name="Rieger M."/>
            <person name="Rinke M."/>
            <person name="Rose M."/>
            <person name="Scharfe M."/>
            <person name="Scherens B."/>
            <person name="Scholler P."/>
            <person name="Schwager C."/>
            <person name="Schwarz S."/>
            <person name="Underwood A.P."/>
            <person name="Urrestarazu L.A."/>
            <person name="Vandenbol M."/>
            <person name="Verhasselt P."/>
            <person name="Vierendeels F."/>
            <person name="Voet M."/>
            <person name="Volckaert G."/>
            <person name="Voss H."/>
            <person name="Wambutt R."/>
            <person name="Wedler E."/>
            <person name="Wedler H."/>
            <person name="Zimmermann F.K."/>
            <person name="Zollner A."/>
            <person name="Hani J."/>
            <person name="Hoheisel J.D."/>
        </authorList>
    </citation>
    <scope>NUCLEOTIDE SEQUENCE [LARGE SCALE GENOMIC DNA]</scope>
    <source>
        <strain>ATCC 204508 / S288c</strain>
    </source>
</reference>
<reference key="2">
    <citation type="journal article" date="2014" name="G3 (Bethesda)">
        <title>The reference genome sequence of Saccharomyces cerevisiae: Then and now.</title>
        <authorList>
            <person name="Engel S.R."/>
            <person name="Dietrich F.S."/>
            <person name="Fisk D.G."/>
            <person name="Binkley G."/>
            <person name="Balakrishnan R."/>
            <person name="Costanzo M.C."/>
            <person name="Dwight S.S."/>
            <person name="Hitz B.C."/>
            <person name="Karra K."/>
            <person name="Nash R.S."/>
            <person name="Weng S."/>
            <person name="Wong E.D."/>
            <person name="Lloyd P."/>
            <person name="Skrzypek M.S."/>
            <person name="Miyasato S.R."/>
            <person name="Simison M."/>
            <person name="Cherry J.M."/>
        </authorList>
    </citation>
    <scope>GENOME REANNOTATION</scope>
    <source>
        <strain>ATCC 204508 / S288c</strain>
    </source>
</reference>
<comment type="miscellaneous">
    <text evidence="1">Partially overlaps TOP3 and YLR236C.</text>
</comment>
<comment type="caution">
    <text evidence="2">Product of a dubious gene prediction unlikely to encode a functional protein. Because of that it is not part of the S.cerevisiae S288c complete/reference proteome set.</text>
</comment>
<accession>A0A023PXP4</accession>
<organism>
    <name type="scientific">Saccharomyces cerevisiae (strain ATCC 204508 / S288c)</name>
    <name type="common">Baker's yeast</name>
    <dbReference type="NCBI Taxonomy" id="559292"/>
    <lineage>
        <taxon>Eukaryota</taxon>
        <taxon>Fungi</taxon>
        <taxon>Dikarya</taxon>
        <taxon>Ascomycota</taxon>
        <taxon>Saccharomycotina</taxon>
        <taxon>Saccharomycetes</taxon>
        <taxon>Saccharomycetales</taxon>
        <taxon>Saccharomycetaceae</taxon>
        <taxon>Saccharomyces</taxon>
    </lineage>
</organism>
<gene>
    <name evidence="3" type="ordered locus">YLR235C</name>
</gene>
<evidence type="ECO:0000305" key="1"/>
<evidence type="ECO:0000305" key="2">
    <source>
    </source>
</evidence>
<evidence type="ECO:0000312" key="3">
    <source>
        <dbReference type="SGD" id="S000004225"/>
    </source>
</evidence>
<proteinExistence type="uncertain"/>